<gene>
    <name evidence="1" type="primary">clpX</name>
    <name type="ordered locus">SAV1674</name>
</gene>
<keyword id="KW-0067">ATP-binding</keyword>
<keyword id="KW-0143">Chaperone</keyword>
<keyword id="KW-0479">Metal-binding</keyword>
<keyword id="KW-0547">Nucleotide-binding</keyword>
<keyword id="KW-0862">Zinc</keyword>
<feature type="chain" id="PRO_0000160420" description="ATP-dependent Clp protease ATP-binding subunit ClpX">
    <location>
        <begin position="1"/>
        <end position="420"/>
    </location>
</feature>
<feature type="domain" description="ClpX-type ZB" evidence="2">
    <location>
        <begin position="1"/>
        <end position="54"/>
    </location>
</feature>
<feature type="binding site" evidence="2">
    <location>
        <position position="13"/>
    </location>
    <ligand>
        <name>Zn(2+)</name>
        <dbReference type="ChEBI" id="CHEBI:29105"/>
    </ligand>
</feature>
<feature type="binding site" evidence="2">
    <location>
        <position position="16"/>
    </location>
    <ligand>
        <name>Zn(2+)</name>
        <dbReference type="ChEBI" id="CHEBI:29105"/>
    </ligand>
</feature>
<feature type="binding site" evidence="2">
    <location>
        <position position="35"/>
    </location>
    <ligand>
        <name>Zn(2+)</name>
        <dbReference type="ChEBI" id="CHEBI:29105"/>
    </ligand>
</feature>
<feature type="binding site" evidence="2">
    <location>
        <position position="38"/>
    </location>
    <ligand>
        <name>Zn(2+)</name>
        <dbReference type="ChEBI" id="CHEBI:29105"/>
    </ligand>
</feature>
<feature type="binding site" evidence="1">
    <location>
        <begin position="118"/>
        <end position="125"/>
    </location>
    <ligand>
        <name>ATP</name>
        <dbReference type="ChEBI" id="CHEBI:30616"/>
    </ligand>
</feature>
<proteinExistence type="inferred from homology"/>
<sequence>MFKFNEDEENLKCSFCGKDQDQVKKLVAGSGVYICNECIELCSEIVEEELAQNTSEAMTELPTPKEIMDHLNEYVIGQEKAKKSLAVAVYNHYKRIQQLGPKEDDVELQKSNIALIGPTGSGKTLLAQTLAKTLNVPFAIADATSLTEAGYVGDDVENILLRLIQAADFDIDKAEKGIIYVDEIDKIARKSENTSITRDVSGEGVQQALLKILEGTTASVPPQGGRKHPNQEMIQIDTTNILFILGGAFDGIEEVIKRRLGEKVIGFSSNEADKYDEQALLAQIRPEDLQAYGLIPEFIGRVPIVANLETLDVTALKNILTQPKNALVKQYTKMLELDDVDLEFTEEALSAISEKAIERKTGARGLRSIIEESLIDIMFDVPSNENVTKVVITAQTINEETEPELYDAEGNLINNSKTSA</sequence>
<comment type="function">
    <text evidence="1">ATP-dependent specificity component of the Clp protease. It directs the protease to specific substrates. Can perform chaperone functions in the absence of ClpP.</text>
</comment>
<comment type="subunit">
    <text evidence="1">Component of the ClpX-ClpP complex. Forms a hexameric ring that, in the presence of ATP, binds to fourteen ClpP subunits assembled into a disk-like structure with a central cavity, resembling the structure of eukaryotic proteasomes.</text>
</comment>
<comment type="similarity">
    <text evidence="1">Belongs to the ClpX chaperone family.</text>
</comment>
<evidence type="ECO:0000255" key="1">
    <source>
        <dbReference type="HAMAP-Rule" id="MF_00175"/>
    </source>
</evidence>
<evidence type="ECO:0000255" key="2">
    <source>
        <dbReference type="PROSITE-ProRule" id="PRU01250"/>
    </source>
</evidence>
<organism>
    <name type="scientific">Staphylococcus aureus (strain Mu50 / ATCC 700699)</name>
    <dbReference type="NCBI Taxonomy" id="158878"/>
    <lineage>
        <taxon>Bacteria</taxon>
        <taxon>Bacillati</taxon>
        <taxon>Bacillota</taxon>
        <taxon>Bacilli</taxon>
        <taxon>Bacillales</taxon>
        <taxon>Staphylococcaceae</taxon>
        <taxon>Staphylococcus</taxon>
    </lineage>
</organism>
<reference key="1">
    <citation type="journal article" date="2001" name="Lancet">
        <title>Whole genome sequencing of meticillin-resistant Staphylococcus aureus.</title>
        <authorList>
            <person name="Kuroda M."/>
            <person name="Ohta T."/>
            <person name="Uchiyama I."/>
            <person name="Baba T."/>
            <person name="Yuzawa H."/>
            <person name="Kobayashi I."/>
            <person name="Cui L."/>
            <person name="Oguchi A."/>
            <person name="Aoki K."/>
            <person name="Nagai Y."/>
            <person name="Lian J.-Q."/>
            <person name="Ito T."/>
            <person name="Kanamori M."/>
            <person name="Matsumaru H."/>
            <person name="Maruyama A."/>
            <person name="Murakami H."/>
            <person name="Hosoyama A."/>
            <person name="Mizutani-Ui Y."/>
            <person name="Takahashi N.K."/>
            <person name="Sawano T."/>
            <person name="Inoue R."/>
            <person name="Kaito C."/>
            <person name="Sekimizu K."/>
            <person name="Hirakawa H."/>
            <person name="Kuhara S."/>
            <person name="Goto S."/>
            <person name="Yabuzaki J."/>
            <person name="Kanehisa M."/>
            <person name="Yamashita A."/>
            <person name="Oshima K."/>
            <person name="Furuya K."/>
            <person name="Yoshino C."/>
            <person name="Shiba T."/>
            <person name="Hattori M."/>
            <person name="Ogasawara N."/>
            <person name="Hayashi H."/>
            <person name="Hiramatsu K."/>
        </authorList>
    </citation>
    <scope>NUCLEOTIDE SEQUENCE [LARGE SCALE GENOMIC DNA]</scope>
    <source>
        <strain>Mu50 / ATCC 700699</strain>
    </source>
</reference>
<protein>
    <recommendedName>
        <fullName evidence="1">ATP-dependent Clp protease ATP-binding subunit ClpX</fullName>
    </recommendedName>
</protein>
<dbReference type="EMBL" id="BA000017">
    <property type="protein sequence ID" value="BAB57836.1"/>
    <property type="molecule type" value="Genomic_DNA"/>
</dbReference>
<dbReference type="RefSeq" id="WP_000472302.1">
    <property type="nucleotide sequence ID" value="NC_002758.2"/>
</dbReference>
<dbReference type="SMR" id="P63789"/>
<dbReference type="KEGG" id="sav:SAV1674"/>
<dbReference type="HOGENOM" id="CLU_014218_8_2_9"/>
<dbReference type="PhylomeDB" id="P63789"/>
<dbReference type="Proteomes" id="UP000002481">
    <property type="component" value="Chromosome"/>
</dbReference>
<dbReference type="GO" id="GO:0009376">
    <property type="term" value="C:HslUV protease complex"/>
    <property type="evidence" value="ECO:0007669"/>
    <property type="project" value="TreeGrafter"/>
</dbReference>
<dbReference type="GO" id="GO:0005524">
    <property type="term" value="F:ATP binding"/>
    <property type="evidence" value="ECO:0007669"/>
    <property type="project" value="UniProtKB-UniRule"/>
</dbReference>
<dbReference type="GO" id="GO:0016887">
    <property type="term" value="F:ATP hydrolysis activity"/>
    <property type="evidence" value="ECO:0007669"/>
    <property type="project" value="InterPro"/>
</dbReference>
<dbReference type="GO" id="GO:0140662">
    <property type="term" value="F:ATP-dependent protein folding chaperone"/>
    <property type="evidence" value="ECO:0007669"/>
    <property type="project" value="InterPro"/>
</dbReference>
<dbReference type="GO" id="GO:0046983">
    <property type="term" value="F:protein dimerization activity"/>
    <property type="evidence" value="ECO:0007669"/>
    <property type="project" value="InterPro"/>
</dbReference>
<dbReference type="GO" id="GO:0051082">
    <property type="term" value="F:unfolded protein binding"/>
    <property type="evidence" value="ECO:0007669"/>
    <property type="project" value="UniProtKB-UniRule"/>
</dbReference>
<dbReference type="GO" id="GO:0008270">
    <property type="term" value="F:zinc ion binding"/>
    <property type="evidence" value="ECO:0007669"/>
    <property type="project" value="InterPro"/>
</dbReference>
<dbReference type="GO" id="GO:0051301">
    <property type="term" value="P:cell division"/>
    <property type="evidence" value="ECO:0007669"/>
    <property type="project" value="TreeGrafter"/>
</dbReference>
<dbReference type="GO" id="GO:0051603">
    <property type="term" value="P:proteolysis involved in protein catabolic process"/>
    <property type="evidence" value="ECO:0007669"/>
    <property type="project" value="TreeGrafter"/>
</dbReference>
<dbReference type="CDD" id="cd19497">
    <property type="entry name" value="RecA-like_ClpX"/>
    <property type="match status" value="1"/>
</dbReference>
<dbReference type="FunFam" id="1.10.8.60:FF:000002">
    <property type="entry name" value="ATP-dependent Clp protease ATP-binding subunit ClpX"/>
    <property type="match status" value="1"/>
</dbReference>
<dbReference type="FunFam" id="3.40.50.300:FF:000005">
    <property type="entry name" value="ATP-dependent Clp protease ATP-binding subunit ClpX"/>
    <property type="match status" value="1"/>
</dbReference>
<dbReference type="Gene3D" id="1.10.8.60">
    <property type="match status" value="1"/>
</dbReference>
<dbReference type="Gene3D" id="6.20.220.10">
    <property type="entry name" value="ClpX chaperone, C4-type zinc finger domain"/>
    <property type="match status" value="1"/>
</dbReference>
<dbReference type="Gene3D" id="3.40.50.300">
    <property type="entry name" value="P-loop containing nucleotide triphosphate hydrolases"/>
    <property type="match status" value="1"/>
</dbReference>
<dbReference type="HAMAP" id="MF_00175">
    <property type="entry name" value="ClpX"/>
    <property type="match status" value="1"/>
</dbReference>
<dbReference type="InterPro" id="IPR003593">
    <property type="entry name" value="AAA+_ATPase"/>
</dbReference>
<dbReference type="InterPro" id="IPR050052">
    <property type="entry name" value="ATP-dep_Clp_protease_ClpX"/>
</dbReference>
<dbReference type="InterPro" id="IPR003959">
    <property type="entry name" value="ATPase_AAA_core"/>
</dbReference>
<dbReference type="InterPro" id="IPR019489">
    <property type="entry name" value="Clp_ATPase_C"/>
</dbReference>
<dbReference type="InterPro" id="IPR004487">
    <property type="entry name" value="Clp_protease_ATP-bd_su_ClpX"/>
</dbReference>
<dbReference type="InterPro" id="IPR046425">
    <property type="entry name" value="ClpX_bact"/>
</dbReference>
<dbReference type="InterPro" id="IPR027417">
    <property type="entry name" value="P-loop_NTPase"/>
</dbReference>
<dbReference type="InterPro" id="IPR010603">
    <property type="entry name" value="Znf_CppX_C4"/>
</dbReference>
<dbReference type="InterPro" id="IPR038366">
    <property type="entry name" value="Znf_CppX_C4_sf"/>
</dbReference>
<dbReference type="NCBIfam" id="TIGR00382">
    <property type="entry name" value="clpX"/>
    <property type="match status" value="1"/>
</dbReference>
<dbReference type="NCBIfam" id="NF003745">
    <property type="entry name" value="PRK05342.1"/>
    <property type="match status" value="1"/>
</dbReference>
<dbReference type="PANTHER" id="PTHR48102:SF7">
    <property type="entry name" value="ATP-DEPENDENT CLP PROTEASE ATP-BINDING SUBUNIT CLPX-LIKE, MITOCHONDRIAL"/>
    <property type="match status" value="1"/>
</dbReference>
<dbReference type="PANTHER" id="PTHR48102">
    <property type="entry name" value="ATP-DEPENDENT CLP PROTEASE ATP-BINDING SUBUNIT CLPX-LIKE, MITOCHONDRIAL-RELATED"/>
    <property type="match status" value="1"/>
</dbReference>
<dbReference type="Pfam" id="PF07724">
    <property type="entry name" value="AAA_2"/>
    <property type="match status" value="1"/>
</dbReference>
<dbReference type="Pfam" id="PF10431">
    <property type="entry name" value="ClpB_D2-small"/>
    <property type="match status" value="1"/>
</dbReference>
<dbReference type="Pfam" id="PF06689">
    <property type="entry name" value="zf-C4_ClpX"/>
    <property type="match status" value="1"/>
</dbReference>
<dbReference type="SMART" id="SM00382">
    <property type="entry name" value="AAA"/>
    <property type="match status" value="1"/>
</dbReference>
<dbReference type="SMART" id="SM01086">
    <property type="entry name" value="ClpB_D2-small"/>
    <property type="match status" value="1"/>
</dbReference>
<dbReference type="SMART" id="SM00994">
    <property type="entry name" value="zf-C4_ClpX"/>
    <property type="match status" value="1"/>
</dbReference>
<dbReference type="SUPFAM" id="SSF57716">
    <property type="entry name" value="Glucocorticoid receptor-like (DNA-binding domain)"/>
    <property type="match status" value="1"/>
</dbReference>
<dbReference type="SUPFAM" id="SSF52540">
    <property type="entry name" value="P-loop containing nucleoside triphosphate hydrolases"/>
    <property type="match status" value="1"/>
</dbReference>
<dbReference type="PROSITE" id="PS51902">
    <property type="entry name" value="CLPX_ZB"/>
    <property type="match status" value="1"/>
</dbReference>
<accession>P63789</accession>
<accession>Q99TI7</accession>
<name>CLPX_STAAM</name>